<sequence>MEPSPLSPSGAALPLPLSLAPPPLPLPAAAVVHVSFPEVTSALLESLNQQRLQGQLCDVSIRVQGREFRAHRAVLAASSPYFHDQVLLKGMTSISLPSVMDPGAFETVLASAYTGRLSMAAADIVNFLTVGSVLQMWHIVDKCTELLREGRASATTTTITPAAATSATVPGAGVPSGSGATVVPATVGSVRSHASSRASENQSPSSSNYFSPRESTDFSSSSQEAFPASAVGSGERRGGGPVFPAPVVGSGGATSGKLLLEADELCHDGGDERGPVVPGAGLRRPTYAPPSIMPQKHWVYVKRGGNSPAPAPLVPQDPDLEEDEEEDLVLTCEDDEDEELGGGSRVPEAGGREATLSISDVRTLTEPPDKGEEQVNFCESSNDFGSYDGGGPGAGLDDSGGPTPSSYAPSHPPRPLLPLDMQGNQILVFPSSSSSSSSSSSSQAPGQPPGNQAEHGAVTLGGTSSGALGMPGGPGGTPGGTGSGDGNKIFLCHCGKAFSHKSMRDRHVNMHLNLRPFDCPVCNKKFKMKHHLTEHMKTHTGLKPYECGVCAKKFMWRDSFMRHRGHCERRHRLVGGGGGGGPGPGGPTGPTLPLKRESPGAGGGSGDEASGATPQSSRRVWSPPSVHKVEMGFGGGGGTN</sequence>
<name>ZBT22_CANLF</name>
<feature type="chain" id="PRO_0000047516" description="Zinc finger and BTB domain-containing protein 22">
    <location>
        <begin position="1"/>
        <end position="640"/>
    </location>
</feature>
<feature type="domain" description="BTB" evidence="2">
    <location>
        <begin position="57"/>
        <end position="121"/>
    </location>
</feature>
<feature type="zinc finger region" description="C2H2-type 1; atypical" evidence="3">
    <location>
        <begin position="490"/>
        <end position="511"/>
    </location>
</feature>
<feature type="zinc finger region" description="C2H2-type 2" evidence="3">
    <location>
        <begin position="517"/>
        <end position="539"/>
    </location>
</feature>
<feature type="zinc finger region" description="C2H2-type 3" evidence="3">
    <location>
        <begin position="545"/>
        <end position="571"/>
    </location>
</feature>
<feature type="region of interest" description="Disordered" evidence="4">
    <location>
        <begin position="191"/>
        <end position="244"/>
    </location>
</feature>
<feature type="region of interest" description="Disordered" evidence="4">
    <location>
        <begin position="308"/>
        <end position="327"/>
    </location>
</feature>
<feature type="region of interest" description="Disordered" evidence="4">
    <location>
        <begin position="332"/>
        <end position="482"/>
    </location>
</feature>
<feature type="region of interest" description="Disordered" evidence="4">
    <location>
        <begin position="571"/>
        <end position="640"/>
    </location>
</feature>
<feature type="compositionally biased region" description="Polar residues" evidence="4">
    <location>
        <begin position="192"/>
        <end position="210"/>
    </location>
</feature>
<feature type="compositionally biased region" description="Acidic residues" evidence="4">
    <location>
        <begin position="318"/>
        <end position="327"/>
    </location>
</feature>
<feature type="compositionally biased region" description="Low complexity" evidence="4">
    <location>
        <begin position="431"/>
        <end position="442"/>
    </location>
</feature>
<feature type="compositionally biased region" description="Gly residues" evidence="4">
    <location>
        <begin position="469"/>
        <end position="482"/>
    </location>
</feature>
<feature type="compositionally biased region" description="Gly residues" evidence="4">
    <location>
        <begin position="574"/>
        <end position="588"/>
    </location>
</feature>
<feature type="modified residue" description="Phosphoserine" evidence="1">
    <location>
        <position position="203"/>
    </location>
</feature>
<accession>Q5TJE2</accession>
<keyword id="KW-0238">DNA-binding</keyword>
<keyword id="KW-0479">Metal-binding</keyword>
<keyword id="KW-0539">Nucleus</keyword>
<keyword id="KW-0597">Phosphoprotein</keyword>
<keyword id="KW-1185">Reference proteome</keyword>
<keyword id="KW-0677">Repeat</keyword>
<keyword id="KW-0804">Transcription</keyword>
<keyword id="KW-0805">Transcription regulation</keyword>
<keyword id="KW-0862">Zinc</keyword>
<keyword id="KW-0863">Zinc-finger</keyword>
<evidence type="ECO:0000250" key="1">
    <source>
        <dbReference type="UniProtKB" id="O15209"/>
    </source>
</evidence>
<evidence type="ECO:0000255" key="2">
    <source>
        <dbReference type="PROSITE-ProRule" id="PRU00037"/>
    </source>
</evidence>
<evidence type="ECO:0000255" key="3">
    <source>
        <dbReference type="PROSITE-ProRule" id="PRU00042"/>
    </source>
</evidence>
<evidence type="ECO:0000256" key="4">
    <source>
        <dbReference type="SAM" id="MobiDB-lite"/>
    </source>
</evidence>
<evidence type="ECO:0000305" key="5"/>
<organism>
    <name type="scientific">Canis lupus familiaris</name>
    <name type="common">Dog</name>
    <name type="synonym">Canis familiaris</name>
    <dbReference type="NCBI Taxonomy" id="9615"/>
    <lineage>
        <taxon>Eukaryota</taxon>
        <taxon>Metazoa</taxon>
        <taxon>Chordata</taxon>
        <taxon>Craniata</taxon>
        <taxon>Vertebrata</taxon>
        <taxon>Euteleostomi</taxon>
        <taxon>Mammalia</taxon>
        <taxon>Eutheria</taxon>
        <taxon>Laurasiatheria</taxon>
        <taxon>Carnivora</taxon>
        <taxon>Caniformia</taxon>
        <taxon>Canidae</taxon>
        <taxon>Canis</taxon>
    </lineage>
</organism>
<dbReference type="EMBL" id="AJ630366">
    <property type="protein sequence ID" value="CAI11446.1"/>
    <property type="molecule type" value="Genomic_DNA"/>
</dbReference>
<dbReference type="RefSeq" id="XP_005627257.2">
    <property type="nucleotide sequence ID" value="XM_005627200.4"/>
</dbReference>
<dbReference type="RefSeq" id="XP_038409631.1">
    <property type="nucleotide sequence ID" value="XM_038553703.1"/>
</dbReference>
<dbReference type="RefSeq" id="XP_038539102.1">
    <property type="nucleotide sequence ID" value="XM_038683174.1"/>
</dbReference>
<dbReference type="SMR" id="Q5TJE2"/>
<dbReference type="FunCoup" id="Q5TJE2">
    <property type="interactions" value="150"/>
</dbReference>
<dbReference type="STRING" id="9615.ENSCAFP00000001388"/>
<dbReference type="PaxDb" id="9612-ENSCAFP00000001388"/>
<dbReference type="Ensembl" id="ENSCAFT00000001511.6">
    <property type="protein sequence ID" value="ENSCAFP00000001388.6"/>
    <property type="gene ID" value="ENSCAFG00000000977.6"/>
</dbReference>
<dbReference type="Ensembl" id="ENSCAFT00030023311.1">
    <property type="protein sequence ID" value="ENSCAFP00030020325.1"/>
    <property type="gene ID" value="ENSCAFG00030012594.1"/>
</dbReference>
<dbReference type="Ensembl" id="ENSCAFT00040039520.1">
    <property type="protein sequence ID" value="ENSCAFP00040034480.1"/>
    <property type="gene ID" value="ENSCAFG00040021306.1"/>
</dbReference>
<dbReference type="Ensembl" id="ENSCAFT00845037986.1">
    <property type="protein sequence ID" value="ENSCAFP00845029765.1"/>
    <property type="gene ID" value="ENSCAFG00845021534.1"/>
</dbReference>
<dbReference type="GeneID" id="607900"/>
<dbReference type="KEGG" id="cfa:607900"/>
<dbReference type="CTD" id="9278"/>
<dbReference type="VEuPathDB" id="HostDB:ENSCAFG00845021534"/>
<dbReference type="VGNC" id="VGNC:48527">
    <property type="gene designation" value="ZBTB22"/>
</dbReference>
<dbReference type="eggNOG" id="KOG1721">
    <property type="taxonomic scope" value="Eukaryota"/>
</dbReference>
<dbReference type="GeneTree" id="ENSGT00940000160991"/>
<dbReference type="InParanoid" id="Q5TJE2"/>
<dbReference type="OrthoDB" id="10004641at2759"/>
<dbReference type="Proteomes" id="UP000002254">
    <property type="component" value="Chromosome 12"/>
</dbReference>
<dbReference type="Proteomes" id="UP000694429">
    <property type="component" value="Chromosome 12"/>
</dbReference>
<dbReference type="Proteomes" id="UP000694542">
    <property type="component" value="Chromosome 12"/>
</dbReference>
<dbReference type="Proteomes" id="UP000805418">
    <property type="component" value="Chromosome 12"/>
</dbReference>
<dbReference type="GO" id="GO:0005634">
    <property type="term" value="C:nucleus"/>
    <property type="evidence" value="ECO:0007669"/>
    <property type="project" value="UniProtKB-SubCell"/>
</dbReference>
<dbReference type="GO" id="GO:0000981">
    <property type="term" value="F:DNA-binding transcription factor activity, RNA polymerase II-specific"/>
    <property type="evidence" value="ECO:0000318"/>
    <property type="project" value="GO_Central"/>
</dbReference>
<dbReference type="GO" id="GO:0000978">
    <property type="term" value="F:RNA polymerase II cis-regulatory region sequence-specific DNA binding"/>
    <property type="evidence" value="ECO:0000318"/>
    <property type="project" value="GO_Central"/>
</dbReference>
<dbReference type="GO" id="GO:0008270">
    <property type="term" value="F:zinc ion binding"/>
    <property type="evidence" value="ECO:0007669"/>
    <property type="project" value="UniProtKB-KW"/>
</dbReference>
<dbReference type="GO" id="GO:0006357">
    <property type="term" value="P:regulation of transcription by RNA polymerase II"/>
    <property type="evidence" value="ECO:0000318"/>
    <property type="project" value="GO_Central"/>
</dbReference>
<dbReference type="CDD" id="cd18210">
    <property type="entry name" value="BTB_POZ_ZBTB22_BING1"/>
    <property type="match status" value="1"/>
</dbReference>
<dbReference type="FunFam" id="3.30.710.10:FF:000107">
    <property type="entry name" value="Zinc finger and BTB domain containing 22"/>
    <property type="match status" value="1"/>
</dbReference>
<dbReference type="FunFam" id="3.30.160.60:FF:000145">
    <property type="entry name" value="Zinc finger protein 574"/>
    <property type="match status" value="1"/>
</dbReference>
<dbReference type="Gene3D" id="3.30.160.60">
    <property type="entry name" value="Classic Zinc Finger"/>
    <property type="match status" value="1"/>
</dbReference>
<dbReference type="Gene3D" id="3.30.710.10">
    <property type="entry name" value="Potassium Channel Kv1.1, Chain A"/>
    <property type="match status" value="1"/>
</dbReference>
<dbReference type="InterPro" id="IPR000210">
    <property type="entry name" value="BTB/POZ_dom"/>
</dbReference>
<dbReference type="InterPro" id="IPR011333">
    <property type="entry name" value="SKP1/BTB/POZ_sf"/>
</dbReference>
<dbReference type="InterPro" id="IPR036236">
    <property type="entry name" value="Znf_C2H2_sf"/>
</dbReference>
<dbReference type="InterPro" id="IPR013087">
    <property type="entry name" value="Znf_C2H2_type"/>
</dbReference>
<dbReference type="InterPro" id="IPR050457">
    <property type="entry name" value="ZnFinger_BTB_dom_contain"/>
</dbReference>
<dbReference type="PANTHER" id="PTHR46105">
    <property type="entry name" value="AGAP004733-PA"/>
    <property type="match status" value="1"/>
</dbReference>
<dbReference type="PANTHER" id="PTHR46105:SF14">
    <property type="entry name" value="ZINC FINGER AND BTB DOMAIN-CONTAINING PROTEIN 22"/>
    <property type="match status" value="1"/>
</dbReference>
<dbReference type="Pfam" id="PF00651">
    <property type="entry name" value="BTB"/>
    <property type="match status" value="1"/>
</dbReference>
<dbReference type="Pfam" id="PF00096">
    <property type="entry name" value="zf-C2H2"/>
    <property type="match status" value="1"/>
</dbReference>
<dbReference type="SMART" id="SM00225">
    <property type="entry name" value="BTB"/>
    <property type="match status" value="1"/>
</dbReference>
<dbReference type="SMART" id="SM00355">
    <property type="entry name" value="ZnF_C2H2"/>
    <property type="match status" value="3"/>
</dbReference>
<dbReference type="SUPFAM" id="SSF57667">
    <property type="entry name" value="beta-beta-alpha zinc fingers"/>
    <property type="match status" value="1"/>
</dbReference>
<dbReference type="SUPFAM" id="SSF54695">
    <property type="entry name" value="POZ domain"/>
    <property type="match status" value="1"/>
</dbReference>
<dbReference type="PROSITE" id="PS50097">
    <property type="entry name" value="BTB"/>
    <property type="match status" value="1"/>
</dbReference>
<dbReference type="PROSITE" id="PS00028">
    <property type="entry name" value="ZINC_FINGER_C2H2_1"/>
    <property type="match status" value="1"/>
</dbReference>
<dbReference type="PROSITE" id="PS50157">
    <property type="entry name" value="ZINC_FINGER_C2H2_2"/>
    <property type="match status" value="2"/>
</dbReference>
<gene>
    <name type="primary">ZBTB22</name>
    <name type="synonym">ZNF297</name>
</gene>
<protein>
    <recommendedName>
        <fullName>Zinc finger and BTB domain-containing protein 22</fullName>
    </recommendedName>
    <alternativeName>
        <fullName>Zinc finger protein 297</fullName>
    </alternativeName>
</protein>
<comment type="function">
    <text>May be involved in transcriptional regulation.</text>
</comment>
<comment type="subcellular location">
    <subcellularLocation>
        <location evidence="5">Nucleus</location>
    </subcellularLocation>
</comment>
<comment type="similarity">
    <text evidence="5">Belongs to the krueppel C2H2-type zinc-finger protein family.</text>
</comment>
<reference key="1">
    <citation type="journal article" date="2005" name="Genomics">
        <title>Genomic sequence of the class II region of the canine MHC: comparison with the MHC of other mammalian species.</title>
        <authorList>
            <person name="Debenham S.L."/>
            <person name="Hart E.A."/>
            <person name="Ashurst J.L."/>
            <person name="Howe K.L."/>
            <person name="Quail M.A."/>
            <person name="Ollier W.E.R."/>
            <person name="Binns M.M."/>
        </authorList>
    </citation>
    <scope>NUCLEOTIDE SEQUENCE [LARGE SCALE GENOMIC DNA]</scope>
    <source>
        <strain>Doberman pinscher</strain>
    </source>
</reference>
<proteinExistence type="inferred from homology"/>